<comment type="function">
    <text evidence="1">Binds to the 23S rRNA.</text>
</comment>
<comment type="subunit">
    <text evidence="1">Part of the 50S ribosomal subunit.</text>
</comment>
<comment type="similarity">
    <text evidence="1">Belongs to the universal ribosomal protein uL15 family.</text>
</comment>
<accession>A4G9R9</accession>
<feature type="chain" id="PRO_1000054473" description="Large ribosomal subunit protein uL15">
    <location>
        <begin position="1"/>
        <end position="143"/>
    </location>
</feature>
<feature type="region of interest" description="Disordered" evidence="2">
    <location>
        <begin position="1"/>
        <end position="52"/>
    </location>
</feature>
<feature type="compositionally biased region" description="Gly residues" evidence="2">
    <location>
        <begin position="21"/>
        <end position="31"/>
    </location>
</feature>
<gene>
    <name evidence="1" type="primary">rplO</name>
    <name type="ordered locus">HEAR3147</name>
</gene>
<reference key="1">
    <citation type="journal article" date="2007" name="PLoS Genet.">
        <title>A tale of two oxidation states: bacterial colonization of arsenic-rich environments.</title>
        <authorList>
            <person name="Muller D."/>
            <person name="Medigue C."/>
            <person name="Koechler S."/>
            <person name="Barbe V."/>
            <person name="Barakat M."/>
            <person name="Talla E."/>
            <person name="Bonnefoy V."/>
            <person name="Krin E."/>
            <person name="Arsene-Ploetze F."/>
            <person name="Carapito C."/>
            <person name="Chandler M."/>
            <person name="Cournoyer B."/>
            <person name="Cruveiller S."/>
            <person name="Dossat C."/>
            <person name="Duval S."/>
            <person name="Heymann M."/>
            <person name="Leize E."/>
            <person name="Lieutaud A."/>
            <person name="Lievremont D."/>
            <person name="Makita Y."/>
            <person name="Mangenot S."/>
            <person name="Nitschke W."/>
            <person name="Ortet P."/>
            <person name="Perdrial N."/>
            <person name="Schoepp B."/>
            <person name="Siguier P."/>
            <person name="Simeonova D.D."/>
            <person name="Rouy Z."/>
            <person name="Segurens B."/>
            <person name="Turlin E."/>
            <person name="Vallenet D."/>
            <person name="van Dorsselaer A."/>
            <person name="Weiss S."/>
            <person name="Weissenbach J."/>
            <person name="Lett M.-C."/>
            <person name="Danchin A."/>
            <person name="Bertin P.N."/>
        </authorList>
    </citation>
    <scope>NUCLEOTIDE SEQUENCE [LARGE SCALE GENOMIC DNA]</scope>
    <source>
        <strain>ULPAs1</strain>
    </source>
</reference>
<evidence type="ECO:0000255" key="1">
    <source>
        <dbReference type="HAMAP-Rule" id="MF_01341"/>
    </source>
</evidence>
<evidence type="ECO:0000256" key="2">
    <source>
        <dbReference type="SAM" id="MobiDB-lite"/>
    </source>
</evidence>
<evidence type="ECO:0000305" key="3"/>
<dbReference type="EMBL" id="CU207211">
    <property type="protein sequence ID" value="CAL63256.1"/>
    <property type="molecule type" value="Genomic_DNA"/>
</dbReference>
<dbReference type="SMR" id="A4G9R9"/>
<dbReference type="STRING" id="204773.HEAR3147"/>
<dbReference type="KEGG" id="har:HEAR3147"/>
<dbReference type="eggNOG" id="COG0200">
    <property type="taxonomic scope" value="Bacteria"/>
</dbReference>
<dbReference type="HOGENOM" id="CLU_055188_4_2_4"/>
<dbReference type="OrthoDB" id="9810293at2"/>
<dbReference type="Proteomes" id="UP000006697">
    <property type="component" value="Chromosome"/>
</dbReference>
<dbReference type="GO" id="GO:0022625">
    <property type="term" value="C:cytosolic large ribosomal subunit"/>
    <property type="evidence" value="ECO:0007669"/>
    <property type="project" value="TreeGrafter"/>
</dbReference>
<dbReference type="GO" id="GO:0019843">
    <property type="term" value="F:rRNA binding"/>
    <property type="evidence" value="ECO:0007669"/>
    <property type="project" value="UniProtKB-UniRule"/>
</dbReference>
<dbReference type="GO" id="GO:0003735">
    <property type="term" value="F:structural constituent of ribosome"/>
    <property type="evidence" value="ECO:0007669"/>
    <property type="project" value="InterPro"/>
</dbReference>
<dbReference type="GO" id="GO:0006412">
    <property type="term" value="P:translation"/>
    <property type="evidence" value="ECO:0007669"/>
    <property type="project" value="UniProtKB-UniRule"/>
</dbReference>
<dbReference type="Gene3D" id="3.100.10.10">
    <property type="match status" value="1"/>
</dbReference>
<dbReference type="HAMAP" id="MF_01341">
    <property type="entry name" value="Ribosomal_uL15"/>
    <property type="match status" value="1"/>
</dbReference>
<dbReference type="InterPro" id="IPR030878">
    <property type="entry name" value="Ribosomal_uL15"/>
</dbReference>
<dbReference type="InterPro" id="IPR021131">
    <property type="entry name" value="Ribosomal_uL15/eL18"/>
</dbReference>
<dbReference type="InterPro" id="IPR036227">
    <property type="entry name" value="Ribosomal_uL15/eL18_sf"/>
</dbReference>
<dbReference type="InterPro" id="IPR005749">
    <property type="entry name" value="Ribosomal_uL15_bac-type"/>
</dbReference>
<dbReference type="InterPro" id="IPR001196">
    <property type="entry name" value="Ribosomal_uL15_CS"/>
</dbReference>
<dbReference type="NCBIfam" id="TIGR01071">
    <property type="entry name" value="rplO_bact"/>
    <property type="match status" value="1"/>
</dbReference>
<dbReference type="PANTHER" id="PTHR12934">
    <property type="entry name" value="50S RIBOSOMAL PROTEIN L15"/>
    <property type="match status" value="1"/>
</dbReference>
<dbReference type="PANTHER" id="PTHR12934:SF11">
    <property type="entry name" value="LARGE RIBOSOMAL SUBUNIT PROTEIN UL15M"/>
    <property type="match status" value="1"/>
</dbReference>
<dbReference type="Pfam" id="PF00828">
    <property type="entry name" value="Ribosomal_L27A"/>
    <property type="match status" value="1"/>
</dbReference>
<dbReference type="SUPFAM" id="SSF52080">
    <property type="entry name" value="Ribosomal proteins L15p and L18e"/>
    <property type="match status" value="1"/>
</dbReference>
<dbReference type="PROSITE" id="PS00475">
    <property type="entry name" value="RIBOSOMAL_L15"/>
    <property type="match status" value="1"/>
</dbReference>
<name>RL15_HERAR</name>
<protein>
    <recommendedName>
        <fullName evidence="1">Large ribosomal subunit protein uL15</fullName>
    </recommendedName>
    <alternativeName>
        <fullName evidence="3">50S ribosomal protein L15</fullName>
    </alternativeName>
</protein>
<sequence>MELNTIQPADGAKHYKRRVGRGIGSGLGKTAGRGHKGQKSRSGGFHKVGFEGGQMPLQRRLPKRGFKSLATPYKAEVRLSDLEALPVTEIDILALKQAGVIGELARVVRVILSGELTKKVTLKGLIATKGAKAAIEAAGGSVA</sequence>
<proteinExistence type="inferred from homology"/>
<organism>
    <name type="scientific">Herminiimonas arsenicoxydans</name>
    <dbReference type="NCBI Taxonomy" id="204773"/>
    <lineage>
        <taxon>Bacteria</taxon>
        <taxon>Pseudomonadati</taxon>
        <taxon>Pseudomonadota</taxon>
        <taxon>Betaproteobacteria</taxon>
        <taxon>Burkholderiales</taxon>
        <taxon>Oxalobacteraceae</taxon>
        <taxon>Herminiimonas</taxon>
    </lineage>
</organism>
<keyword id="KW-1185">Reference proteome</keyword>
<keyword id="KW-0687">Ribonucleoprotein</keyword>
<keyword id="KW-0689">Ribosomal protein</keyword>
<keyword id="KW-0694">RNA-binding</keyword>
<keyword id="KW-0699">rRNA-binding</keyword>